<sequence>MQARFHTSWAELPASLQFALEPILSAENFPAMLTAEQVKTVKNISGLDDDALAFALLPLATACALTPISHFNVGAIARGKSGNFYFGANMEFRGVPLQQTIHAEQCAVTHAWLRGETNLVAITVNYTPCGHCRQFMNELNSGSELHIHLPGRPPSTLGQYLPDSFGPTDLAITTLLMDPVNHGYTLAETDPLTQAALNAANHSHAPYSQSHSGVALETTNGKIYAGRYAENAAFNPSLPPLQAALILANITGENCASIRRAVLVEGHNAVTSQWDTTLATLNALGCSAVKRVTF</sequence>
<evidence type="ECO:0000255" key="1">
    <source>
        <dbReference type="HAMAP-Rule" id="MF_01558"/>
    </source>
</evidence>
<evidence type="ECO:0000255" key="2">
    <source>
        <dbReference type="PROSITE-ProRule" id="PRU01083"/>
    </source>
</evidence>
<name>CDD_YERPG</name>
<reference key="1">
    <citation type="journal article" date="2010" name="J. Bacteriol.">
        <title>Genome sequence of the deep-rooted Yersinia pestis strain Angola reveals new insights into the evolution and pangenome of the plague bacterium.</title>
        <authorList>
            <person name="Eppinger M."/>
            <person name="Worsham P.L."/>
            <person name="Nikolich M.P."/>
            <person name="Riley D.R."/>
            <person name="Sebastian Y."/>
            <person name="Mou S."/>
            <person name="Achtman M."/>
            <person name="Lindler L.E."/>
            <person name="Ravel J."/>
        </authorList>
    </citation>
    <scope>NUCLEOTIDE SEQUENCE [LARGE SCALE GENOMIC DNA]</scope>
    <source>
        <strain>Angola</strain>
    </source>
</reference>
<proteinExistence type="inferred from homology"/>
<dbReference type="EC" id="3.5.4.5" evidence="1"/>
<dbReference type="EMBL" id="CP000901">
    <property type="protein sequence ID" value="ABX84952.1"/>
    <property type="molecule type" value="Genomic_DNA"/>
</dbReference>
<dbReference type="RefSeq" id="WP_002211969.1">
    <property type="nucleotide sequence ID" value="NZ_CP009935.1"/>
</dbReference>
<dbReference type="SMR" id="A9R1B9"/>
<dbReference type="GeneID" id="57977056"/>
<dbReference type="KEGG" id="ypg:YpAngola_A3023"/>
<dbReference type="PATRIC" id="fig|349746.12.peg.4075"/>
<dbReference type="GO" id="GO:0005829">
    <property type="term" value="C:cytosol"/>
    <property type="evidence" value="ECO:0007669"/>
    <property type="project" value="TreeGrafter"/>
</dbReference>
<dbReference type="GO" id="GO:0004126">
    <property type="term" value="F:cytidine deaminase activity"/>
    <property type="evidence" value="ECO:0007669"/>
    <property type="project" value="UniProtKB-UniRule"/>
</dbReference>
<dbReference type="GO" id="GO:0042802">
    <property type="term" value="F:identical protein binding"/>
    <property type="evidence" value="ECO:0007669"/>
    <property type="project" value="UniProtKB-ARBA"/>
</dbReference>
<dbReference type="GO" id="GO:0008270">
    <property type="term" value="F:zinc ion binding"/>
    <property type="evidence" value="ECO:0007669"/>
    <property type="project" value="UniProtKB-UniRule"/>
</dbReference>
<dbReference type="GO" id="GO:0009972">
    <property type="term" value="P:cytidine deamination"/>
    <property type="evidence" value="ECO:0007669"/>
    <property type="project" value="InterPro"/>
</dbReference>
<dbReference type="CDD" id="cd01283">
    <property type="entry name" value="cytidine_deaminase"/>
    <property type="match status" value="2"/>
</dbReference>
<dbReference type="FunFam" id="3.40.140.10:FF:000006">
    <property type="entry name" value="Cytidine deaminase"/>
    <property type="match status" value="1"/>
</dbReference>
<dbReference type="FunFam" id="3.40.140.10:FF:000007">
    <property type="entry name" value="Cytidine deaminase"/>
    <property type="match status" value="1"/>
</dbReference>
<dbReference type="Gene3D" id="3.40.140.10">
    <property type="entry name" value="Cytidine Deaminase, domain 2"/>
    <property type="match status" value="2"/>
</dbReference>
<dbReference type="HAMAP" id="MF_01558">
    <property type="entry name" value="Cyt_deam"/>
    <property type="match status" value="1"/>
</dbReference>
<dbReference type="InterPro" id="IPR016192">
    <property type="entry name" value="APOBEC/CMP_deaminase_Zn-bd"/>
</dbReference>
<dbReference type="InterPro" id="IPR002125">
    <property type="entry name" value="CMP_dCMP_dom"/>
</dbReference>
<dbReference type="InterPro" id="IPR013171">
    <property type="entry name" value="Cyd/dCyd_deaminase_Zn-bd"/>
</dbReference>
<dbReference type="InterPro" id="IPR050202">
    <property type="entry name" value="Cyt/Deoxycyt_deaminase"/>
</dbReference>
<dbReference type="InterPro" id="IPR006263">
    <property type="entry name" value="Cyt_deam_dimer"/>
</dbReference>
<dbReference type="InterPro" id="IPR016193">
    <property type="entry name" value="Cytidine_deaminase-like"/>
</dbReference>
<dbReference type="InterPro" id="IPR020797">
    <property type="entry name" value="Cytidine_deaminase_bacteria"/>
</dbReference>
<dbReference type="NCBIfam" id="TIGR01355">
    <property type="entry name" value="cyt_deam_dimer"/>
    <property type="match status" value="1"/>
</dbReference>
<dbReference type="NCBIfam" id="NF006537">
    <property type="entry name" value="PRK09027.1"/>
    <property type="match status" value="1"/>
</dbReference>
<dbReference type="PANTHER" id="PTHR11644">
    <property type="entry name" value="CYTIDINE DEAMINASE"/>
    <property type="match status" value="1"/>
</dbReference>
<dbReference type="PANTHER" id="PTHR11644:SF2">
    <property type="entry name" value="CYTIDINE DEAMINASE"/>
    <property type="match status" value="1"/>
</dbReference>
<dbReference type="Pfam" id="PF00383">
    <property type="entry name" value="dCMP_cyt_deam_1"/>
    <property type="match status" value="1"/>
</dbReference>
<dbReference type="Pfam" id="PF08211">
    <property type="entry name" value="dCMP_cyt_deam_2"/>
    <property type="match status" value="1"/>
</dbReference>
<dbReference type="PIRSF" id="PIRSF006334">
    <property type="entry name" value="Cdd_plus_pseudo"/>
    <property type="match status" value="1"/>
</dbReference>
<dbReference type="SUPFAM" id="SSF53927">
    <property type="entry name" value="Cytidine deaminase-like"/>
    <property type="match status" value="2"/>
</dbReference>
<dbReference type="PROSITE" id="PS00903">
    <property type="entry name" value="CYT_DCMP_DEAMINASES_1"/>
    <property type="match status" value="1"/>
</dbReference>
<dbReference type="PROSITE" id="PS51747">
    <property type="entry name" value="CYT_DCMP_DEAMINASES_2"/>
    <property type="match status" value="2"/>
</dbReference>
<accession>A9R1B9</accession>
<protein>
    <recommendedName>
        <fullName evidence="1">Cytidine deaminase</fullName>
        <ecNumber evidence="1">3.5.4.5</ecNumber>
    </recommendedName>
    <alternativeName>
        <fullName evidence="1">Cytidine aminohydrolase</fullName>
        <shortName evidence="1">CDA</shortName>
    </alternativeName>
</protein>
<keyword id="KW-0378">Hydrolase</keyword>
<keyword id="KW-0479">Metal-binding</keyword>
<keyword id="KW-0862">Zinc</keyword>
<comment type="function">
    <text evidence="1">This enzyme scavenges exogenous and endogenous cytidine and 2'-deoxycytidine for UMP synthesis.</text>
</comment>
<comment type="catalytic activity">
    <reaction evidence="1">
        <text>cytidine + H2O + H(+) = uridine + NH4(+)</text>
        <dbReference type="Rhea" id="RHEA:16069"/>
        <dbReference type="ChEBI" id="CHEBI:15377"/>
        <dbReference type="ChEBI" id="CHEBI:15378"/>
        <dbReference type="ChEBI" id="CHEBI:16704"/>
        <dbReference type="ChEBI" id="CHEBI:17562"/>
        <dbReference type="ChEBI" id="CHEBI:28938"/>
        <dbReference type="EC" id="3.5.4.5"/>
    </reaction>
</comment>
<comment type="catalytic activity">
    <reaction evidence="1">
        <text>2'-deoxycytidine + H2O + H(+) = 2'-deoxyuridine + NH4(+)</text>
        <dbReference type="Rhea" id="RHEA:13433"/>
        <dbReference type="ChEBI" id="CHEBI:15377"/>
        <dbReference type="ChEBI" id="CHEBI:15378"/>
        <dbReference type="ChEBI" id="CHEBI:15698"/>
        <dbReference type="ChEBI" id="CHEBI:16450"/>
        <dbReference type="ChEBI" id="CHEBI:28938"/>
        <dbReference type="EC" id="3.5.4.5"/>
    </reaction>
</comment>
<comment type="cofactor">
    <cofactor evidence="1">
        <name>Zn(2+)</name>
        <dbReference type="ChEBI" id="CHEBI:29105"/>
    </cofactor>
    <text evidence="1">Binds 1 zinc ion.</text>
</comment>
<comment type="subunit">
    <text evidence="1">Homodimer.</text>
</comment>
<comment type="similarity">
    <text evidence="1">Belongs to the cytidine and deoxycytidylate deaminase family.</text>
</comment>
<gene>
    <name evidence="1" type="primary">cdd</name>
    <name type="ordered locus">YpAngola_A3023</name>
</gene>
<feature type="chain" id="PRO_1000147120" description="Cytidine deaminase">
    <location>
        <begin position="1"/>
        <end position="294"/>
    </location>
</feature>
<feature type="domain" description="CMP/dCMP-type deaminase 1" evidence="2">
    <location>
        <begin position="48"/>
        <end position="168"/>
    </location>
</feature>
<feature type="domain" description="CMP/dCMP-type deaminase 2" evidence="2">
    <location>
        <begin position="187"/>
        <end position="294"/>
    </location>
</feature>
<feature type="active site" description="Proton donor" evidence="1">
    <location>
        <position position="104"/>
    </location>
</feature>
<feature type="binding site" evidence="1">
    <location>
        <begin position="89"/>
        <end position="91"/>
    </location>
    <ligand>
        <name>substrate</name>
    </ligand>
</feature>
<feature type="binding site" evidence="1">
    <location>
        <position position="102"/>
    </location>
    <ligand>
        <name>Zn(2+)</name>
        <dbReference type="ChEBI" id="CHEBI:29105"/>
        <note>catalytic</note>
    </ligand>
</feature>
<feature type="binding site" evidence="1">
    <location>
        <position position="129"/>
    </location>
    <ligand>
        <name>Zn(2+)</name>
        <dbReference type="ChEBI" id="CHEBI:29105"/>
        <note>catalytic</note>
    </ligand>
</feature>
<feature type="binding site" evidence="1">
    <location>
        <position position="132"/>
    </location>
    <ligand>
        <name>Zn(2+)</name>
        <dbReference type="ChEBI" id="CHEBI:29105"/>
        <note>catalytic</note>
    </ligand>
</feature>
<organism>
    <name type="scientific">Yersinia pestis bv. Antiqua (strain Angola)</name>
    <dbReference type="NCBI Taxonomy" id="349746"/>
    <lineage>
        <taxon>Bacteria</taxon>
        <taxon>Pseudomonadati</taxon>
        <taxon>Pseudomonadota</taxon>
        <taxon>Gammaproteobacteria</taxon>
        <taxon>Enterobacterales</taxon>
        <taxon>Yersiniaceae</taxon>
        <taxon>Yersinia</taxon>
    </lineage>
</organism>